<accession>Q5ZY91</accession>
<proteinExistence type="inferred from homology"/>
<feature type="chain" id="PRO_0000229172" description="tRNA (guanine-N(7)-)-methyltransferase">
    <location>
        <begin position="1"/>
        <end position="226"/>
    </location>
</feature>
<feature type="active site" evidence="1">
    <location>
        <position position="132"/>
    </location>
</feature>
<feature type="binding site" evidence="2">
    <location>
        <position position="57"/>
    </location>
    <ligand>
        <name>S-adenosyl-L-methionine</name>
        <dbReference type="ChEBI" id="CHEBI:59789"/>
    </ligand>
</feature>
<feature type="binding site" evidence="2">
    <location>
        <position position="82"/>
    </location>
    <ligand>
        <name>S-adenosyl-L-methionine</name>
        <dbReference type="ChEBI" id="CHEBI:59789"/>
    </ligand>
</feature>
<feature type="binding site" evidence="2">
    <location>
        <position position="109"/>
    </location>
    <ligand>
        <name>S-adenosyl-L-methionine</name>
        <dbReference type="ChEBI" id="CHEBI:59789"/>
    </ligand>
</feature>
<feature type="binding site" evidence="2">
    <location>
        <position position="132"/>
    </location>
    <ligand>
        <name>S-adenosyl-L-methionine</name>
        <dbReference type="ChEBI" id="CHEBI:59789"/>
    </ligand>
</feature>
<feature type="binding site" evidence="2">
    <location>
        <position position="136"/>
    </location>
    <ligand>
        <name>substrate</name>
    </ligand>
</feature>
<feature type="binding site" evidence="2">
    <location>
        <position position="168"/>
    </location>
    <ligand>
        <name>substrate</name>
    </ligand>
</feature>
<feature type="binding site" evidence="2">
    <location>
        <begin position="205"/>
        <end position="208"/>
    </location>
    <ligand>
        <name>substrate</name>
    </ligand>
</feature>
<organism>
    <name type="scientific">Legionella pneumophila subsp. pneumophila (strain Philadelphia 1 / ATCC 33152 / DSM 7513)</name>
    <dbReference type="NCBI Taxonomy" id="272624"/>
    <lineage>
        <taxon>Bacteria</taxon>
        <taxon>Pseudomonadati</taxon>
        <taxon>Pseudomonadota</taxon>
        <taxon>Gammaproteobacteria</taxon>
        <taxon>Legionellales</taxon>
        <taxon>Legionellaceae</taxon>
        <taxon>Legionella</taxon>
    </lineage>
</organism>
<dbReference type="EC" id="2.1.1.33" evidence="2"/>
<dbReference type="EMBL" id="AE017354">
    <property type="protein sequence ID" value="AAU26578.1"/>
    <property type="molecule type" value="Genomic_DNA"/>
</dbReference>
<dbReference type="RefSeq" id="YP_094525.1">
    <property type="nucleotide sequence ID" value="NC_002942.5"/>
</dbReference>
<dbReference type="SMR" id="Q5ZY91"/>
<dbReference type="STRING" id="272624.lpg0481"/>
<dbReference type="PaxDb" id="272624-lpg0481"/>
<dbReference type="KEGG" id="lpn:lpg0481"/>
<dbReference type="PATRIC" id="fig|272624.6.peg.501"/>
<dbReference type="eggNOG" id="COG0220">
    <property type="taxonomic scope" value="Bacteria"/>
</dbReference>
<dbReference type="HOGENOM" id="CLU_050910_0_1_6"/>
<dbReference type="OrthoDB" id="9802090at2"/>
<dbReference type="UniPathway" id="UPA00989"/>
<dbReference type="Proteomes" id="UP000000609">
    <property type="component" value="Chromosome"/>
</dbReference>
<dbReference type="GO" id="GO:0043527">
    <property type="term" value="C:tRNA methyltransferase complex"/>
    <property type="evidence" value="ECO:0007669"/>
    <property type="project" value="TreeGrafter"/>
</dbReference>
<dbReference type="GO" id="GO:0008176">
    <property type="term" value="F:tRNA (guanine(46)-N7)-methyltransferase activity"/>
    <property type="evidence" value="ECO:0007669"/>
    <property type="project" value="UniProtKB-UniRule"/>
</dbReference>
<dbReference type="Gene3D" id="3.40.50.150">
    <property type="entry name" value="Vaccinia Virus protein VP39"/>
    <property type="match status" value="1"/>
</dbReference>
<dbReference type="HAMAP" id="MF_01057">
    <property type="entry name" value="tRNA_methyltr_TrmB"/>
    <property type="match status" value="1"/>
</dbReference>
<dbReference type="InterPro" id="IPR029063">
    <property type="entry name" value="SAM-dependent_MTases_sf"/>
</dbReference>
<dbReference type="InterPro" id="IPR003358">
    <property type="entry name" value="tRNA_(Gua-N-7)_MeTrfase_Trmb"/>
</dbReference>
<dbReference type="InterPro" id="IPR055361">
    <property type="entry name" value="tRNA_methyltr_TrmB_bact"/>
</dbReference>
<dbReference type="NCBIfam" id="TIGR00091">
    <property type="entry name" value="tRNA (guanosine(46)-N7)-methyltransferase TrmB"/>
    <property type="match status" value="1"/>
</dbReference>
<dbReference type="PANTHER" id="PTHR23417">
    <property type="entry name" value="3-DEOXY-D-MANNO-OCTULOSONIC-ACID TRANSFERASE/TRNA GUANINE-N 7 - -METHYLTRANSFERASE"/>
    <property type="match status" value="1"/>
</dbReference>
<dbReference type="PANTHER" id="PTHR23417:SF14">
    <property type="entry name" value="PENTACOTRIPEPTIDE-REPEAT REGION OF PRORP DOMAIN-CONTAINING PROTEIN"/>
    <property type="match status" value="1"/>
</dbReference>
<dbReference type="Pfam" id="PF02390">
    <property type="entry name" value="Methyltransf_4"/>
    <property type="match status" value="1"/>
</dbReference>
<dbReference type="SUPFAM" id="SSF53335">
    <property type="entry name" value="S-adenosyl-L-methionine-dependent methyltransferases"/>
    <property type="match status" value="1"/>
</dbReference>
<dbReference type="PROSITE" id="PS51625">
    <property type="entry name" value="SAM_MT_TRMB"/>
    <property type="match status" value="1"/>
</dbReference>
<protein>
    <recommendedName>
        <fullName evidence="2">tRNA (guanine-N(7)-)-methyltransferase</fullName>
        <ecNumber evidence="2">2.1.1.33</ecNumber>
    </recommendedName>
    <alternativeName>
        <fullName evidence="2">tRNA (guanine(46)-N(7))-methyltransferase</fullName>
    </alternativeName>
    <alternativeName>
        <fullName evidence="2">tRNA(m7G46)-methyltransferase</fullName>
    </alternativeName>
</protein>
<name>TRMB_LEGPH</name>
<sequence>MMQRKIKSYVLRAGRISNRQQQGLDLWLEDYELKFDSPTPWNFAKEFGRHDADTIVEIGFGMGTSLFAMAMNNPQCNYLGIEVHKAGVGSLVADLHEYQISNVRVVVHDAVEVLQTKIPENSLAGVQIFFPDPWHKKRHHKRRLIQSEFIQMLVKKIRPSGFIHCATDWEDYAEHILNVLSSESALFNQQKEGGYSPRPDSRPLTKFELRGERLGHGVWDLVFIKK</sequence>
<reference key="1">
    <citation type="journal article" date="2004" name="Science">
        <title>The genomic sequence of the accidental pathogen Legionella pneumophila.</title>
        <authorList>
            <person name="Chien M."/>
            <person name="Morozova I."/>
            <person name="Shi S."/>
            <person name="Sheng H."/>
            <person name="Chen J."/>
            <person name="Gomez S.M."/>
            <person name="Asamani G."/>
            <person name="Hill K."/>
            <person name="Nuara J."/>
            <person name="Feder M."/>
            <person name="Rineer J."/>
            <person name="Greenberg J.J."/>
            <person name="Steshenko V."/>
            <person name="Park S.H."/>
            <person name="Zhao B."/>
            <person name="Teplitskaya E."/>
            <person name="Edwards J.R."/>
            <person name="Pampou S."/>
            <person name="Georghiou A."/>
            <person name="Chou I.-C."/>
            <person name="Iannuccilli W."/>
            <person name="Ulz M.E."/>
            <person name="Kim D.H."/>
            <person name="Geringer-Sameth A."/>
            <person name="Goldsberry C."/>
            <person name="Morozov P."/>
            <person name="Fischer S.G."/>
            <person name="Segal G."/>
            <person name="Qu X."/>
            <person name="Rzhetsky A."/>
            <person name="Zhang P."/>
            <person name="Cayanis E."/>
            <person name="De Jong P.J."/>
            <person name="Ju J."/>
            <person name="Kalachikov S."/>
            <person name="Shuman H.A."/>
            <person name="Russo J.J."/>
        </authorList>
    </citation>
    <scope>NUCLEOTIDE SEQUENCE [LARGE SCALE GENOMIC DNA]</scope>
    <source>
        <strain>Philadelphia 1 / ATCC 33152 / DSM 7513</strain>
    </source>
</reference>
<evidence type="ECO:0000250" key="1"/>
<evidence type="ECO:0000255" key="2">
    <source>
        <dbReference type="HAMAP-Rule" id="MF_01057"/>
    </source>
</evidence>
<comment type="function">
    <text evidence="2">Catalyzes the formation of N(7)-methylguanine at position 46 (m7G46) in tRNA.</text>
</comment>
<comment type="catalytic activity">
    <reaction evidence="2">
        <text>guanosine(46) in tRNA + S-adenosyl-L-methionine = N(7)-methylguanosine(46) in tRNA + S-adenosyl-L-homocysteine</text>
        <dbReference type="Rhea" id="RHEA:42708"/>
        <dbReference type="Rhea" id="RHEA-COMP:10188"/>
        <dbReference type="Rhea" id="RHEA-COMP:10189"/>
        <dbReference type="ChEBI" id="CHEBI:57856"/>
        <dbReference type="ChEBI" id="CHEBI:59789"/>
        <dbReference type="ChEBI" id="CHEBI:74269"/>
        <dbReference type="ChEBI" id="CHEBI:74480"/>
        <dbReference type="EC" id="2.1.1.33"/>
    </reaction>
</comment>
<comment type="pathway">
    <text evidence="2">tRNA modification; N(7)-methylguanine-tRNA biosynthesis.</text>
</comment>
<comment type="similarity">
    <text evidence="2">Belongs to the class I-like SAM-binding methyltransferase superfamily. TrmB family.</text>
</comment>
<gene>
    <name evidence="2" type="primary">trmB</name>
    <name type="ordered locus">lpg0481</name>
</gene>
<keyword id="KW-0489">Methyltransferase</keyword>
<keyword id="KW-1185">Reference proteome</keyword>
<keyword id="KW-0949">S-adenosyl-L-methionine</keyword>
<keyword id="KW-0808">Transferase</keyword>
<keyword id="KW-0819">tRNA processing</keyword>